<name>OPGD_PSEF5</name>
<organism>
    <name type="scientific">Pseudomonas fluorescens (strain ATCC BAA-477 / NRRL B-23932 / Pf-5)</name>
    <dbReference type="NCBI Taxonomy" id="220664"/>
    <lineage>
        <taxon>Bacteria</taxon>
        <taxon>Pseudomonadati</taxon>
        <taxon>Pseudomonadota</taxon>
        <taxon>Gammaproteobacteria</taxon>
        <taxon>Pseudomonadales</taxon>
        <taxon>Pseudomonadaceae</taxon>
        <taxon>Pseudomonas</taxon>
    </lineage>
</organism>
<dbReference type="EMBL" id="CP000076">
    <property type="protein sequence ID" value="AAY90409.1"/>
    <property type="molecule type" value="Genomic_DNA"/>
</dbReference>
<dbReference type="RefSeq" id="WP_011059470.1">
    <property type="nucleotide sequence ID" value="NC_004129.6"/>
</dbReference>
<dbReference type="SMR" id="Q4KHN0"/>
<dbReference type="STRING" id="220664.PFL_1122"/>
<dbReference type="KEGG" id="pfl:PFL_1122"/>
<dbReference type="PATRIC" id="fig|220664.5.peg.1152"/>
<dbReference type="eggNOG" id="COG3131">
    <property type="taxonomic scope" value="Bacteria"/>
</dbReference>
<dbReference type="HOGENOM" id="CLU_023403_2_0_6"/>
<dbReference type="UniPathway" id="UPA00637"/>
<dbReference type="Proteomes" id="UP000008540">
    <property type="component" value="Chromosome"/>
</dbReference>
<dbReference type="GO" id="GO:0030288">
    <property type="term" value="C:outer membrane-bounded periplasmic space"/>
    <property type="evidence" value="ECO:0007669"/>
    <property type="project" value="TreeGrafter"/>
</dbReference>
<dbReference type="GO" id="GO:0030246">
    <property type="term" value="F:carbohydrate binding"/>
    <property type="evidence" value="ECO:0007669"/>
    <property type="project" value="InterPro"/>
</dbReference>
<dbReference type="GO" id="GO:0003824">
    <property type="term" value="F:catalytic activity"/>
    <property type="evidence" value="ECO:0007669"/>
    <property type="project" value="InterPro"/>
</dbReference>
<dbReference type="GO" id="GO:0051274">
    <property type="term" value="P:beta-glucan biosynthetic process"/>
    <property type="evidence" value="ECO:0007669"/>
    <property type="project" value="TreeGrafter"/>
</dbReference>
<dbReference type="Gene3D" id="2.70.98.10">
    <property type="match status" value="1"/>
</dbReference>
<dbReference type="Gene3D" id="2.60.40.10">
    <property type="entry name" value="Immunoglobulins"/>
    <property type="match status" value="1"/>
</dbReference>
<dbReference type="HAMAP" id="MF_01068">
    <property type="entry name" value="MdoD_OpgD"/>
    <property type="match status" value="1"/>
</dbReference>
<dbReference type="InterPro" id="IPR011013">
    <property type="entry name" value="Gal_mutarotase_sf_dom"/>
</dbReference>
<dbReference type="InterPro" id="IPR014718">
    <property type="entry name" value="GH-type_carb-bd"/>
</dbReference>
<dbReference type="InterPro" id="IPR023724">
    <property type="entry name" value="Glucan_biosyn_MdoD"/>
</dbReference>
<dbReference type="InterPro" id="IPR014438">
    <property type="entry name" value="Glucan_biosyn_MdoG/MdoD"/>
</dbReference>
<dbReference type="InterPro" id="IPR007444">
    <property type="entry name" value="Glucan_biosyn_MdoG_C"/>
</dbReference>
<dbReference type="InterPro" id="IPR013783">
    <property type="entry name" value="Ig-like_fold"/>
</dbReference>
<dbReference type="InterPro" id="IPR014756">
    <property type="entry name" value="Ig_E-set"/>
</dbReference>
<dbReference type="InterPro" id="IPR006311">
    <property type="entry name" value="TAT_signal"/>
</dbReference>
<dbReference type="PANTHER" id="PTHR30504">
    <property type="entry name" value="GLUCANS BIOSYNTHESIS PROTEIN"/>
    <property type="match status" value="1"/>
</dbReference>
<dbReference type="PANTHER" id="PTHR30504:SF3">
    <property type="entry name" value="GLUCANS BIOSYNTHESIS PROTEIN D"/>
    <property type="match status" value="1"/>
</dbReference>
<dbReference type="Pfam" id="PF04349">
    <property type="entry name" value="MdoG"/>
    <property type="match status" value="1"/>
</dbReference>
<dbReference type="PIRSF" id="PIRSF006281">
    <property type="entry name" value="MdoG"/>
    <property type="match status" value="1"/>
</dbReference>
<dbReference type="SUPFAM" id="SSF81296">
    <property type="entry name" value="E set domains"/>
    <property type="match status" value="1"/>
</dbReference>
<dbReference type="SUPFAM" id="SSF74650">
    <property type="entry name" value="Galactose mutarotase-like"/>
    <property type="match status" value="1"/>
</dbReference>
<dbReference type="PROSITE" id="PS51318">
    <property type="entry name" value="TAT"/>
    <property type="match status" value="1"/>
</dbReference>
<protein>
    <recommendedName>
        <fullName evidence="1">Glucans biosynthesis protein D</fullName>
    </recommendedName>
</protein>
<evidence type="ECO:0000255" key="1">
    <source>
        <dbReference type="HAMAP-Rule" id="MF_01068"/>
    </source>
</evidence>
<proteinExistence type="inferred from homology"/>
<keyword id="KW-0574">Periplasm</keyword>
<keyword id="KW-0732">Signal</keyword>
<gene>
    <name evidence="1" type="primary">opgD</name>
    <name type="ordered locus">PFL_1122</name>
</gene>
<comment type="function">
    <text evidence="1">Probably involved in the control of the structural glucose backbone of osmoregulated periplasmic glucans (OPGs).</text>
</comment>
<comment type="pathway">
    <text evidence="1">Glycan metabolism; osmoregulated periplasmic glucan (OPG) biosynthesis.</text>
</comment>
<comment type="subcellular location">
    <subcellularLocation>
        <location evidence="1">Periplasm</location>
    </subcellularLocation>
</comment>
<comment type="PTM">
    <text>Predicted to be exported by the Tat system. The position of the signal peptide cleavage has not been experimentally proven.</text>
</comment>
<comment type="similarity">
    <text evidence="1">Belongs to the OpgD/OpgG family.</text>
</comment>
<accession>Q4KHN0</accession>
<feature type="signal peptide" description="Tat-type signal" evidence="1">
    <location>
        <begin position="1"/>
        <end position="31"/>
    </location>
</feature>
<feature type="chain" id="PRO_1000064549" description="Glucans biosynthesis protein D">
    <location>
        <begin position="32"/>
        <end position="539"/>
    </location>
</feature>
<sequence length="539" mass="60513">MHRRNLLKASMALAAYTGLSASGLLAARAWAGAADGQAQAFDFEQLKAQAKQLAASQYVDTKQVLPPTLAKMTPQNFNAIQYDSKHSLWNELNGQLDVQFFHVGMGFKQPVRMHSVDPKTRQAREVHFRPPLFNYQNTSVDTAQLKGDLGFAGFKLFKAPELDKHDVVSFLGASYFRAVDATGQYGLSARGLAIDTYAKRREEFPDFTQFWFETPDKDSTRFVVYALLDSPSATGAYRFDIDCQAERVVMDVDAHINARTAIEQLGIAPMTSMFSCGTHERRMCDTIHPQIHDSDRLAMWRGNGEWICRPLNNPANLQFNAFADKDPKGFGLVQTDHEFASYQDTVDWYSRRPSLWVEPTTAWGEGSIDLLEIPTTGETLDNIVAFWTPKKPVAAGDSLNYGYKLYWSALPPVGTPLARVHATRSGMGGFVEGWAPGEHYPEVWARRFAVDFTGGGLDRLPAGTGIEPVVTASNGEVKDFNVLVLDEIKGYRITFDWFPTNDSVEPVELRLFIRTNDRTLSETWLYQYFPPAPDKRKYP</sequence>
<reference key="1">
    <citation type="journal article" date="2005" name="Nat. Biotechnol.">
        <title>Complete genome sequence of the plant commensal Pseudomonas fluorescens Pf-5.</title>
        <authorList>
            <person name="Paulsen I.T."/>
            <person name="Press C.M."/>
            <person name="Ravel J."/>
            <person name="Kobayashi D.Y."/>
            <person name="Myers G.S.A."/>
            <person name="Mavrodi D.V."/>
            <person name="DeBoy R.T."/>
            <person name="Seshadri R."/>
            <person name="Ren Q."/>
            <person name="Madupu R."/>
            <person name="Dodson R.J."/>
            <person name="Durkin A.S."/>
            <person name="Brinkac L.M."/>
            <person name="Daugherty S.C."/>
            <person name="Sullivan S.A."/>
            <person name="Rosovitz M.J."/>
            <person name="Gwinn M.L."/>
            <person name="Zhou L."/>
            <person name="Schneider D.J."/>
            <person name="Cartinhour S.W."/>
            <person name="Nelson W.C."/>
            <person name="Weidman J."/>
            <person name="Watkins K."/>
            <person name="Tran K."/>
            <person name="Khouri H."/>
            <person name="Pierson E.A."/>
            <person name="Pierson L.S. III"/>
            <person name="Thomashow L.S."/>
            <person name="Loper J.E."/>
        </authorList>
    </citation>
    <scope>NUCLEOTIDE SEQUENCE [LARGE SCALE GENOMIC DNA]</scope>
    <source>
        <strain>ATCC BAA-477 / NRRL B-23932 / Pf-5</strain>
    </source>
</reference>